<dbReference type="EC" id="2.5.1.7" evidence="1"/>
<dbReference type="EMBL" id="BA000034">
    <property type="protein sequence ID" value="BAC63922.1"/>
    <property type="molecule type" value="Genomic_DNA"/>
</dbReference>
<dbReference type="RefSeq" id="WP_011054631.1">
    <property type="nucleotide sequence ID" value="NC_004606.1"/>
</dbReference>
<dbReference type="SMR" id="P0DC47"/>
<dbReference type="KEGG" id="sps:SPs0827"/>
<dbReference type="HOGENOM" id="CLU_027387_0_0_9"/>
<dbReference type="UniPathway" id="UPA00219"/>
<dbReference type="GO" id="GO:0005737">
    <property type="term" value="C:cytoplasm"/>
    <property type="evidence" value="ECO:0007669"/>
    <property type="project" value="UniProtKB-SubCell"/>
</dbReference>
<dbReference type="GO" id="GO:0008760">
    <property type="term" value="F:UDP-N-acetylglucosamine 1-carboxyvinyltransferase activity"/>
    <property type="evidence" value="ECO:0007669"/>
    <property type="project" value="UniProtKB-UniRule"/>
</dbReference>
<dbReference type="GO" id="GO:0051301">
    <property type="term" value="P:cell division"/>
    <property type="evidence" value="ECO:0007669"/>
    <property type="project" value="UniProtKB-KW"/>
</dbReference>
<dbReference type="GO" id="GO:0071555">
    <property type="term" value="P:cell wall organization"/>
    <property type="evidence" value="ECO:0007669"/>
    <property type="project" value="UniProtKB-KW"/>
</dbReference>
<dbReference type="GO" id="GO:0009252">
    <property type="term" value="P:peptidoglycan biosynthetic process"/>
    <property type="evidence" value="ECO:0007669"/>
    <property type="project" value="UniProtKB-UniRule"/>
</dbReference>
<dbReference type="GO" id="GO:0008360">
    <property type="term" value="P:regulation of cell shape"/>
    <property type="evidence" value="ECO:0007669"/>
    <property type="project" value="UniProtKB-KW"/>
</dbReference>
<dbReference type="GO" id="GO:0019277">
    <property type="term" value="P:UDP-N-acetylgalactosamine biosynthetic process"/>
    <property type="evidence" value="ECO:0007669"/>
    <property type="project" value="InterPro"/>
</dbReference>
<dbReference type="CDD" id="cd01555">
    <property type="entry name" value="UdpNAET"/>
    <property type="match status" value="1"/>
</dbReference>
<dbReference type="FunFam" id="3.65.10.10:FF:000001">
    <property type="entry name" value="UDP-N-acetylglucosamine 1-carboxyvinyltransferase"/>
    <property type="match status" value="1"/>
</dbReference>
<dbReference type="Gene3D" id="3.65.10.10">
    <property type="entry name" value="Enolpyruvate transferase domain"/>
    <property type="match status" value="2"/>
</dbReference>
<dbReference type="HAMAP" id="MF_00111">
    <property type="entry name" value="MurA"/>
    <property type="match status" value="1"/>
</dbReference>
<dbReference type="InterPro" id="IPR001986">
    <property type="entry name" value="Enolpyruvate_Tfrase_dom"/>
</dbReference>
<dbReference type="InterPro" id="IPR036968">
    <property type="entry name" value="Enolpyruvate_Tfrase_sf"/>
</dbReference>
<dbReference type="InterPro" id="IPR050068">
    <property type="entry name" value="MurA_subfamily"/>
</dbReference>
<dbReference type="InterPro" id="IPR013792">
    <property type="entry name" value="RNA3'P_cycl/enolpyr_Trfase_a/b"/>
</dbReference>
<dbReference type="InterPro" id="IPR005750">
    <property type="entry name" value="UDP_GlcNAc_COvinyl_MurA"/>
</dbReference>
<dbReference type="NCBIfam" id="TIGR01072">
    <property type="entry name" value="murA"/>
    <property type="match status" value="1"/>
</dbReference>
<dbReference type="NCBIfam" id="NF006873">
    <property type="entry name" value="PRK09369.1"/>
    <property type="match status" value="1"/>
</dbReference>
<dbReference type="NCBIfam" id="NF009470">
    <property type="entry name" value="PRK12830.1"/>
    <property type="match status" value="1"/>
</dbReference>
<dbReference type="PANTHER" id="PTHR43783">
    <property type="entry name" value="UDP-N-ACETYLGLUCOSAMINE 1-CARBOXYVINYLTRANSFERASE"/>
    <property type="match status" value="1"/>
</dbReference>
<dbReference type="PANTHER" id="PTHR43783:SF2">
    <property type="entry name" value="UDP-N-ACETYLGLUCOSAMINE 1-CARBOXYVINYLTRANSFERASE 2"/>
    <property type="match status" value="1"/>
</dbReference>
<dbReference type="Pfam" id="PF00275">
    <property type="entry name" value="EPSP_synthase"/>
    <property type="match status" value="1"/>
</dbReference>
<dbReference type="SUPFAM" id="SSF55205">
    <property type="entry name" value="EPT/RTPC-like"/>
    <property type="match status" value="1"/>
</dbReference>
<evidence type="ECO:0000255" key="1">
    <source>
        <dbReference type="HAMAP-Rule" id="MF_00111"/>
    </source>
</evidence>
<name>MURA2_STRPQ</name>
<reference key="1">
    <citation type="journal article" date="2003" name="Genome Res.">
        <title>Genome sequence of an M3 strain of Streptococcus pyogenes reveals a large-scale genomic rearrangement in invasive strains and new insights into phage evolution.</title>
        <authorList>
            <person name="Nakagawa I."/>
            <person name="Kurokawa K."/>
            <person name="Yamashita A."/>
            <person name="Nakata M."/>
            <person name="Tomiyasu Y."/>
            <person name="Okahashi N."/>
            <person name="Kawabata S."/>
            <person name="Yamazaki K."/>
            <person name="Shiba T."/>
            <person name="Yasunaga T."/>
            <person name="Hayashi H."/>
            <person name="Hattori M."/>
            <person name="Hamada S."/>
        </authorList>
    </citation>
    <scope>NUCLEOTIDE SEQUENCE [LARGE SCALE GENOMIC DNA]</scope>
    <source>
        <strain>SSI-1</strain>
    </source>
</reference>
<comment type="function">
    <text evidence="1">Cell wall formation. Adds enolpyruvyl to UDP-N-acetylglucosamine.</text>
</comment>
<comment type="catalytic activity">
    <reaction evidence="1">
        <text>phosphoenolpyruvate + UDP-N-acetyl-alpha-D-glucosamine = UDP-N-acetyl-3-O-(1-carboxyvinyl)-alpha-D-glucosamine + phosphate</text>
        <dbReference type="Rhea" id="RHEA:18681"/>
        <dbReference type="ChEBI" id="CHEBI:43474"/>
        <dbReference type="ChEBI" id="CHEBI:57705"/>
        <dbReference type="ChEBI" id="CHEBI:58702"/>
        <dbReference type="ChEBI" id="CHEBI:68483"/>
        <dbReference type="EC" id="2.5.1.7"/>
    </reaction>
</comment>
<comment type="pathway">
    <text evidence="1">Cell wall biogenesis; peptidoglycan biosynthesis.</text>
</comment>
<comment type="subcellular location">
    <subcellularLocation>
        <location evidence="1">Cytoplasm</location>
    </subcellularLocation>
</comment>
<comment type="similarity">
    <text evidence="1">Belongs to the EPSP synthase family. MurA subfamily.</text>
</comment>
<accession>P0DC47</accession>
<accession>Q878W4</accession>
<accession>Q8K716</accession>
<gene>
    <name evidence="1" type="primary">murA2</name>
    <name type="synonym">murZ</name>
    <name type="ordered locus">SPs0827</name>
</gene>
<protein>
    <recommendedName>
        <fullName evidence="1">UDP-N-acetylglucosamine 1-carboxyvinyltransferase 2</fullName>
        <ecNumber evidence="1">2.5.1.7</ecNumber>
    </recommendedName>
    <alternativeName>
        <fullName evidence="1">Enoylpyruvate transferase 2</fullName>
    </alternativeName>
    <alternativeName>
        <fullName evidence="1">UDP-N-acetylglucosamine enolpyruvyl transferase 2</fullName>
        <shortName evidence="1">EPT 2</shortName>
    </alternativeName>
</protein>
<organism>
    <name type="scientific">Streptococcus pyogenes serotype M3 (strain SSI-1)</name>
    <dbReference type="NCBI Taxonomy" id="193567"/>
    <lineage>
        <taxon>Bacteria</taxon>
        <taxon>Bacillati</taxon>
        <taxon>Bacillota</taxon>
        <taxon>Bacilli</taxon>
        <taxon>Lactobacillales</taxon>
        <taxon>Streptococcaceae</taxon>
        <taxon>Streptococcus</taxon>
    </lineage>
</organism>
<keyword id="KW-0131">Cell cycle</keyword>
<keyword id="KW-0132">Cell division</keyword>
<keyword id="KW-0133">Cell shape</keyword>
<keyword id="KW-0961">Cell wall biogenesis/degradation</keyword>
<keyword id="KW-0963">Cytoplasm</keyword>
<keyword id="KW-0573">Peptidoglycan synthesis</keyword>
<keyword id="KW-0670">Pyruvate</keyword>
<keyword id="KW-0808">Transferase</keyword>
<feature type="chain" id="PRO_0000411411" description="UDP-N-acetylglucosamine 1-carboxyvinyltransferase 2">
    <location>
        <begin position="1"/>
        <end position="419"/>
    </location>
</feature>
<feature type="active site" description="Proton donor" evidence="1">
    <location>
        <position position="116"/>
    </location>
</feature>
<feature type="binding site" evidence="1">
    <location>
        <begin position="22"/>
        <end position="23"/>
    </location>
    <ligand>
        <name>phosphoenolpyruvate</name>
        <dbReference type="ChEBI" id="CHEBI:58702"/>
    </ligand>
</feature>
<feature type="binding site" evidence="1">
    <location>
        <position position="92"/>
    </location>
    <ligand>
        <name>UDP-N-acetyl-alpha-D-glucosamine</name>
        <dbReference type="ChEBI" id="CHEBI:57705"/>
    </ligand>
</feature>
<feature type="binding site" evidence="1">
    <location>
        <begin position="121"/>
        <end position="125"/>
    </location>
    <ligand>
        <name>UDP-N-acetyl-alpha-D-glucosamine</name>
        <dbReference type="ChEBI" id="CHEBI:57705"/>
    </ligand>
</feature>
<feature type="binding site" evidence="1">
    <location>
        <position position="306"/>
    </location>
    <ligand>
        <name>UDP-N-acetyl-alpha-D-glucosamine</name>
        <dbReference type="ChEBI" id="CHEBI:57705"/>
    </ligand>
</feature>
<feature type="binding site" evidence="1">
    <location>
        <position position="328"/>
    </location>
    <ligand>
        <name>UDP-N-acetyl-alpha-D-glucosamine</name>
        <dbReference type="ChEBI" id="CHEBI:57705"/>
    </ligand>
</feature>
<feature type="modified residue" description="2-(S-cysteinyl)pyruvic acid O-phosphothioketal" evidence="1">
    <location>
        <position position="116"/>
    </location>
</feature>
<proteinExistence type="inferred from homology"/>
<sequence length="419" mass="44681">MRKIIINGGKALSGEVAVSGAKNSVVALIPAIILADDIVILDGVPAISDVDSLIEIMELMGATVNYHGDTLEIDPRGVQDIPMPYGKINSLRASYYFYGSLLGRFGQAVVGLPGGCDLGPRPIDLHLKAFEAMGVEVSYEGENMNLSTNGQKIHGAHIYMDTVSVGATINTMVAATKAQGKTVIENAAREPEIIDVATLLNNMGAHIRGAGTDIITIQGVQKLHGTRHQVIPDRIEAGTYIALAAAIGKGVKITNVLYEHLESFIAKLEEMGVRMTVEEDAIFVEKQESLKAITIKTSPYPGFATDLQQPLTPLLLKADGRGTIIDTIYEKRINHVPELMRMGADISVIGGQIVYQGPSRLTGAQVKATDLRAGAALVTAGLMAEGKTEITNIEFILRGYASIIAKLTALGADIQLIED</sequence>